<reference key="1">
    <citation type="journal article" date="2006" name="J. Bacteriol.">
        <title>Living with genome instability: the adaptation of phytoplasmas to diverse environments of their insect and plant hosts.</title>
        <authorList>
            <person name="Bai X."/>
            <person name="Zhang J."/>
            <person name="Ewing A."/>
            <person name="Miller S.A."/>
            <person name="Jancso Radek A."/>
            <person name="Shevchenko D.V."/>
            <person name="Tsukerman K."/>
            <person name="Walunas T."/>
            <person name="Lapidus A."/>
            <person name="Campbell J.W."/>
            <person name="Hogenhout S.A."/>
        </authorList>
    </citation>
    <scope>NUCLEOTIDE SEQUENCE [LARGE SCALE GENOMIC DNA]</scope>
    <source>
        <strain>AYWB</strain>
    </source>
</reference>
<name>RL28_AYWBP</name>
<proteinExistence type="inferred from homology"/>
<protein>
    <recommendedName>
        <fullName evidence="1">Large ribosomal subunit protein bL28</fullName>
    </recommendedName>
    <alternativeName>
        <fullName evidence="2">50S ribosomal protein L28</fullName>
    </alternativeName>
</protein>
<sequence>MSKCYITGKTTLFGNRRSHAMNATKRIWKANLQNVKIIDENGKIQKVKISARALKKLKLQRA</sequence>
<organism>
    <name type="scientific">Aster yellows witches'-broom phytoplasma (strain AYWB)</name>
    <dbReference type="NCBI Taxonomy" id="322098"/>
    <lineage>
        <taxon>Bacteria</taxon>
        <taxon>Bacillati</taxon>
        <taxon>Mycoplasmatota</taxon>
        <taxon>Mollicutes</taxon>
        <taxon>Acholeplasmatales</taxon>
        <taxon>Acholeplasmataceae</taxon>
        <taxon>Candidatus Phytoplasma</taxon>
        <taxon>16SrI (Aster yellows group)</taxon>
    </lineage>
</organism>
<feature type="chain" id="PRO_1000007168" description="Large ribosomal subunit protein bL28">
    <location>
        <begin position="1"/>
        <end position="62"/>
    </location>
</feature>
<accession>Q2NIM3</accession>
<gene>
    <name evidence="1" type="primary">rpmB</name>
    <name type="ordered locus">AYWB_603</name>
</gene>
<comment type="similarity">
    <text evidence="1">Belongs to the bacterial ribosomal protein bL28 family.</text>
</comment>
<keyword id="KW-0687">Ribonucleoprotein</keyword>
<keyword id="KW-0689">Ribosomal protein</keyword>
<dbReference type="EMBL" id="CP000061">
    <property type="protein sequence ID" value="ABC65720.1"/>
    <property type="molecule type" value="Genomic_DNA"/>
</dbReference>
<dbReference type="RefSeq" id="WP_011412882.1">
    <property type="nucleotide sequence ID" value="NC_007716.1"/>
</dbReference>
<dbReference type="SMR" id="Q2NIM3"/>
<dbReference type="STRING" id="322098.AYWB_603"/>
<dbReference type="KEGG" id="ayw:AYWB_603"/>
<dbReference type="eggNOG" id="COG0227">
    <property type="taxonomic scope" value="Bacteria"/>
</dbReference>
<dbReference type="HOGENOM" id="CLU_064548_7_1_14"/>
<dbReference type="OrthoDB" id="9805609at2"/>
<dbReference type="PhylomeDB" id="Q2NIM3"/>
<dbReference type="Proteomes" id="UP000001934">
    <property type="component" value="Chromosome"/>
</dbReference>
<dbReference type="GO" id="GO:1990904">
    <property type="term" value="C:ribonucleoprotein complex"/>
    <property type="evidence" value="ECO:0007669"/>
    <property type="project" value="UniProtKB-KW"/>
</dbReference>
<dbReference type="GO" id="GO:0005840">
    <property type="term" value="C:ribosome"/>
    <property type="evidence" value="ECO:0007669"/>
    <property type="project" value="UniProtKB-KW"/>
</dbReference>
<dbReference type="GO" id="GO:0003735">
    <property type="term" value="F:structural constituent of ribosome"/>
    <property type="evidence" value="ECO:0007669"/>
    <property type="project" value="InterPro"/>
</dbReference>
<dbReference type="GO" id="GO:0006412">
    <property type="term" value="P:translation"/>
    <property type="evidence" value="ECO:0007669"/>
    <property type="project" value="UniProtKB-UniRule"/>
</dbReference>
<dbReference type="Gene3D" id="2.30.170.40">
    <property type="entry name" value="Ribosomal protein L28/L24"/>
    <property type="match status" value="1"/>
</dbReference>
<dbReference type="HAMAP" id="MF_00373">
    <property type="entry name" value="Ribosomal_bL28"/>
    <property type="match status" value="1"/>
</dbReference>
<dbReference type="InterPro" id="IPR050096">
    <property type="entry name" value="Bacterial_rp_bL28"/>
</dbReference>
<dbReference type="InterPro" id="IPR026569">
    <property type="entry name" value="Ribosomal_bL28"/>
</dbReference>
<dbReference type="InterPro" id="IPR034704">
    <property type="entry name" value="Ribosomal_bL28/bL31-like_sf"/>
</dbReference>
<dbReference type="InterPro" id="IPR001383">
    <property type="entry name" value="Ribosomal_bL28_bact-type"/>
</dbReference>
<dbReference type="InterPro" id="IPR037147">
    <property type="entry name" value="Ribosomal_bL28_sf"/>
</dbReference>
<dbReference type="NCBIfam" id="TIGR00009">
    <property type="entry name" value="L28"/>
    <property type="match status" value="1"/>
</dbReference>
<dbReference type="PANTHER" id="PTHR39080">
    <property type="entry name" value="50S RIBOSOMAL PROTEIN L28"/>
    <property type="match status" value="1"/>
</dbReference>
<dbReference type="PANTHER" id="PTHR39080:SF1">
    <property type="entry name" value="LARGE RIBOSOMAL SUBUNIT PROTEIN BL28A"/>
    <property type="match status" value="1"/>
</dbReference>
<dbReference type="Pfam" id="PF00830">
    <property type="entry name" value="Ribosomal_L28"/>
    <property type="match status" value="1"/>
</dbReference>
<dbReference type="SUPFAM" id="SSF143800">
    <property type="entry name" value="L28p-like"/>
    <property type="match status" value="1"/>
</dbReference>
<evidence type="ECO:0000255" key="1">
    <source>
        <dbReference type="HAMAP-Rule" id="MF_00373"/>
    </source>
</evidence>
<evidence type="ECO:0000305" key="2"/>